<organism>
    <name type="scientific">Salmonella typhi</name>
    <dbReference type="NCBI Taxonomy" id="90370"/>
    <lineage>
        <taxon>Bacteria</taxon>
        <taxon>Pseudomonadati</taxon>
        <taxon>Pseudomonadota</taxon>
        <taxon>Gammaproteobacteria</taxon>
        <taxon>Enterobacterales</taxon>
        <taxon>Enterobacteriaceae</taxon>
        <taxon>Salmonella</taxon>
    </lineage>
</organism>
<keyword id="KW-0963">Cytoplasm</keyword>
<sequence>MAMYQNMLVVIDPNQDDQPALRRAVYLHQRIGGKIKAFLPIYDFSYEMTTLLSPDERTAMRQGVISQRTAWIREQAKYYLEAGVPIEIKVVWHNRPFEVIIQEVIAGSHDLVLKMAHQHDRLEAVIFTPTDWHLLRKCPSPVWMVKDQPWPEGGKALVAVNLASEEPYHNALNEKLVKETLQLAEQVNHTEVHLVGAYPVTPINIAIELPEFDPSVYNDAIRGQHLLAMKALRQKFSIDEKVTHVEKGLPEEVIPDLAEHLQAGIVVLGTVGRTGLSAAFLGNTAEQVIDHLRCDLLVIKPDEYQTPVELDDEDD</sequence>
<protein>
    <recommendedName>
        <fullName>Universal stress protein E</fullName>
    </recommendedName>
</protein>
<gene>
    <name type="primary">uspE</name>
    <name type="ordered locus">STY1403</name>
    <name type="ordered locus">t1565</name>
</gene>
<dbReference type="EMBL" id="AL513382">
    <property type="protein sequence ID" value="CAD01669.1"/>
    <property type="molecule type" value="Genomic_DNA"/>
</dbReference>
<dbReference type="EMBL" id="AE014613">
    <property type="protein sequence ID" value="AAO69196.1"/>
    <property type="molecule type" value="Genomic_DNA"/>
</dbReference>
<dbReference type="RefSeq" id="NP_455843.1">
    <property type="nucleotide sequence ID" value="NC_003198.1"/>
</dbReference>
<dbReference type="RefSeq" id="WP_001262143.1">
    <property type="nucleotide sequence ID" value="NZ_WSUR01000041.1"/>
</dbReference>
<dbReference type="SMR" id="Q8Z788"/>
<dbReference type="STRING" id="220341.gene:17585359"/>
<dbReference type="KEGG" id="stt:t1565"/>
<dbReference type="KEGG" id="sty:STY1403"/>
<dbReference type="PATRIC" id="fig|220341.7.peg.1413"/>
<dbReference type="eggNOG" id="COG0589">
    <property type="taxonomic scope" value="Bacteria"/>
</dbReference>
<dbReference type="HOGENOM" id="CLU_049301_1_2_6"/>
<dbReference type="OMA" id="MAKYQNM"/>
<dbReference type="OrthoDB" id="239260at2"/>
<dbReference type="Proteomes" id="UP000000541">
    <property type="component" value="Chromosome"/>
</dbReference>
<dbReference type="Proteomes" id="UP000002670">
    <property type="component" value="Chromosome"/>
</dbReference>
<dbReference type="GO" id="GO:0005737">
    <property type="term" value="C:cytoplasm"/>
    <property type="evidence" value="ECO:0007669"/>
    <property type="project" value="UniProtKB-SubCell"/>
</dbReference>
<dbReference type="CDD" id="cd23943">
    <property type="entry name" value="USP-E_repeat1"/>
    <property type="match status" value="1"/>
</dbReference>
<dbReference type="CDD" id="cd23660">
    <property type="entry name" value="USP-E_repeat2"/>
    <property type="match status" value="1"/>
</dbReference>
<dbReference type="FunFam" id="3.40.50.12370:FF:000001">
    <property type="entry name" value="Universal stress protein E"/>
    <property type="match status" value="1"/>
</dbReference>
<dbReference type="Gene3D" id="3.40.50.12370">
    <property type="match status" value="1"/>
</dbReference>
<dbReference type="InterPro" id="IPR006016">
    <property type="entry name" value="UspA"/>
</dbReference>
<dbReference type="NCBIfam" id="NF008380">
    <property type="entry name" value="PRK11175.1"/>
    <property type="match status" value="1"/>
</dbReference>
<dbReference type="PANTHER" id="PTHR47892">
    <property type="entry name" value="UNIVERSAL STRESS PROTEIN E"/>
    <property type="match status" value="1"/>
</dbReference>
<dbReference type="PANTHER" id="PTHR47892:SF1">
    <property type="entry name" value="UNIVERSAL STRESS PROTEIN E"/>
    <property type="match status" value="1"/>
</dbReference>
<dbReference type="Pfam" id="PF00582">
    <property type="entry name" value="Usp"/>
    <property type="match status" value="2"/>
</dbReference>
<dbReference type="SUPFAM" id="SSF52402">
    <property type="entry name" value="Adenine nucleotide alpha hydrolases-like"/>
    <property type="match status" value="2"/>
</dbReference>
<proteinExistence type="inferred from homology"/>
<name>USPE_SALTI</name>
<reference key="1">
    <citation type="journal article" date="2001" name="Nature">
        <title>Complete genome sequence of a multiple drug resistant Salmonella enterica serovar Typhi CT18.</title>
        <authorList>
            <person name="Parkhill J."/>
            <person name="Dougan G."/>
            <person name="James K.D."/>
            <person name="Thomson N.R."/>
            <person name="Pickard D."/>
            <person name="Wain J."/>
            <person name="Churcher C.M."/>
            <person name="Mungall K.L."/>
            <person name="Bentley S.D."/>
            <person name="Holden M.T.G."/>
            <person name="Sebaihia M."/>
            <person name="Baker S."/>
            <person name="Basham D."/>
            <person name="Brooks K."/>
            <person name="Chillingworth T."/>
            <person name="Connerton P."/>
            <person name="Cronin A."/>
            <person name="Davis P."/>
            <person name="Davies R.M."/>
            <person name="Dowd L."/>
            <person name="White N."/>
            <person name="Farrar J."/>
            <person name="Feltwell T."/>
            <person name="Hamlin N."/>
            <person name="Haque A."/>
            <person name="Hien T.T."/>
            <person name="Holroyd S."/>
            <person name="Jagels K."/>
            <person name="Krogh A."/>
            <person name="Larsen T.S."/>
            <person name="Leather S."/>
            <person name="Moule S."/>
            <person name="O'Gaora P."/>
            <person name="Parry C."/>
            <person name="Quail M.A."/>
            <person name="Rutherford K.M."/>
            <person name="Simmonds M."/>
            <person name="Skelton J."/>
            <person name="Stevens K."/>
            <person name="Whitehead S."/>
            <person name="Barrell B.G."/>
        </authorList>
    </citation>
    <scope>NUCLEOTIDE SEQUENCE [LARGE SCALE GENOMIC DNA]</scope>
    <source>
        <strain>CT18</strain>
    </source>
</reference>
<reference key="2">
    <citation type="journal article" date="2003" name="J. Bacteriol.">
        <title>Comparative genomics of Salmonella enterica serovar Typhi strains Ty2 and CT18.</title>
        <authorList>
            <person name="Deng W."/>
            <person name="Liou S.-R."/>
            <person name="Plunkett G. III"/>
            <person name="Mayhew G.F."/>
            <person name="Rose D.J."/>
            <person name="Burland V."/>
            <person name="Kodoyianni V."/>
            <person name="Schwartz D.C."/>
            <person name="Blattner F.R."/>
        </authorList>
    </citation>
    <scope>NUCLEOTIDE SEQUENCE [LARGE SCALE GENOMIC DNA]</scope>
    <source>
        <strain>ATCC 700931 / Ty2</strain>
    </source>
</reference>
<feature type="initiator methionine" description="Removed" evidence="1">
    <location>
        <position position="1"/>
    </location>
</feature>
<feature type="chain" id="PRO_0000147422" description="Universal stress protein E">
    <location>
        <begin position="2"/>
        <end position="315"/>
    </location>
</feature>
<comment type="function">
    <text evidence="1">Required for resistance to DNA-damaging agents.</text>
</comment>
<comment type="subcellular location">
    <subcellularLocation>
        <location evidence="1">Cytoplasm</location>
    </subcellularLocation>
</comment>
<comment type="similarity">
    <text evidence="2">Belongs to the universal stress protein A family.</text>
</comment>
<accession>Q8Z788</accession>
<evidence type="ECO:0000250" key="1"/>
<evidence type="ECO:0000305" key="2"/>